<name>RBS_GUITH</name>
<evidence type="ECO:0000255" key="1">
    <source>
        <dbReference type="HAMAP-Rule" id="MF_00859"/>
    </source>
</evidence>
<sequence>MRLTQGAFSFLPDLTDEQIVKQIQYAISKNWALNVEWTDDPHPRNAYWDLWGLPLFGIKDPAAVMFEINACRKAKPACYVKVNAFDNSRGVESCCLSFIVQRPTSNEPGFQLIRSEVDSRNIRYTIQSYASTRPEGERY</sequence>
<reference key="1">
    <citation type="journal article" date="1989" name="Plant Mol. Biol.">
        <title>The small subunit of ribulose-1,5-bisphosphate carboxylase is plastid-encoded in the chlorophyll c-containing alga Cryptomonas phi.</title>
        <authorList>
            <person name="Douglas S.E."/>
            <person name="Durnford D.G."/>
        </authorList>
    </citation>
    <scope>NUCLEOTIDE SEQUENCE [GENOMIC DNA]</scope>
</reference>
<reference key="2">
    <citation type="journal article" date="1990" name="J. Phycol.">
        <title>Nucleotide sequence of the gene for the large subunit of ribulose-1,5-bisphosphate carboxylase/oxygenase from Cryptomonas phi: evidence supporting the polyphyletic origin of plastids.</title>
        <authorList>
            <person name="Douglas S.E."/>
            <person name="Durnford D.G."/>
            <person name="Morden C.W."/>
        </authorList>
    </citation>
    <scope>NUCLEOTIDE SEQUENCE [GENOMIC DNA] OF 1-46</scope>
</reference>
<feature type="chain" id="PRO_0000198599" description="Ribulose bisphosphate carboxylase small subunit">
    <location>
        <begin position="1"/>
        <end position="139"/>
    </location>
</feature>
<geneLocation type="chloroplast"/>
<dbReference type="EMBL" id="AF041468">
    <property type="protein sequence ID" value="AAC35640.1"/>
    <property type="molecule type" value="Genomic_DNA"/>
</dbReference>
<dbReference type="RefSeq" id="NP_050706.1">
    <property type="nucleotide sequence ID" value="NC_000926.1"/>
</dbReference>
<dbReference type="SMR" id="P14960"/>
<dbReference type="GeneID" id="857004"/>
<dbReference type="HOGENOM" id="CLU_098114_2_0_1"/>
<dbReference type="OMA" id="NIKQCQV"/>
<dbReference type="GO" id="GO:0009507">
    <property type="term" value="C:chloroplast"/>
    <property type="evidence" value="ECO:0007669"/>
    <property type="project" value="UniProtKB-SubCell"/>
</dbReference>
<dbReference type="GO" id="GO:0016984">
    <property type="term" value="F:ribulose-bisphosphate carboxylase activity"/>
    <property type="evidence" value="ECO:0007669"/>
    <property type="project" value="UniProtKB-UniRule"/>
</dbReference>
<dbReference type="GO" id="GO:0019253">
    <property type="term" value="P:reductive pentose-phosphate cycle"/>
    <property type="evidence" value="ECO:0007669"/>
    <property type="project" value="UniProtKB-UniRule"/>
</dbReference>
<dbReference type="CDD" id="cd03527">
    <property type="entry name" value="RuBisCO_small"/>
    <property type="match status" value="1"/>
</dbReference>
<dbReference type="Gene3D" id="3.30.190.10">
    <property type="entry name" value="Ribulose bisphosphate carboxylase, small subunit"/>
    <property type="match status" value="1"/>
</dbReference>
<dbReference type="HAMAP" id="MF_00859">
    <property type="entry name" value="RuBisCO_S_bact"/>
    <property type="match status" value="1"/>
</dbReference>
<dbReference type="InterPro" id="IPR024681">
    <property type="entry name" value="RuBisCO_ssu"/>
</dbReference>
<dbReference type="InterPro" id="IPR000894">
    <property type="entry name" value="RuBisCO_ssu_dom"/>
</dbReference>
<dbReference type="InterPro" id="IPR036385">
    <property type="entry name" value="RuBisCO_ssu_sf"/>
</dbReference>
<dbReference type="PANTHER" id="PTHR31262">
    <property type="entry name" value="RIBULOSE BISPHOSPHATE CARBOXYLASE SMALL CHAIN 1, CHLOROPLASTIC"/>
    <property type="match status" value="1"/>
</dbReference>
<dbReference type="PANTHER" id="PTHR31262:SF23">
    <property type="entry name" value="RIBULOSE BISPHOSPHATE CARBOXYLASE SMALL SUBUNIT"/>
    <property type="match status" value="1"/>
</dbReference>
<dbReference type="Pfam" id="PF00101">
    <property type="entry name" value="RuBisCO_small"/>
    <property type="match status" value="1"/>
</dbReference>
<dbReference type="SMART" id="SM00961">
    <property type="entry name" value="RuBisCO_small"/>
    <property type="match status" value="1"/>
</dbReference>
<dbReference type="SUPFAM" id="SSF55239">
    <property type="entry name" value="RuBisCO, small subunit"/>
    <property type="match status" value="1"/>
</dbReference>
<protein>
    <recommendedName>
        <fullName evidence="1">Ribulose bisphosphate carboxylase small subunit</fullName>
        <shortName evidence="1">RuBisCO small subunit</shortName>
    </recommendedName>
</protein>
<proteinExistence type="inferred from homology"/>
<organism>
    <name type="scientific">Guillardia theta</name>
    <name type="common">Cryptophyte</name>
    <name type="synonym">Cryptomonas phi</name>
    <dbReference type="NCBI Taxonomy" id="55529"/>
    <lineage>
        <taxon>Eukaryota</taxon>
        <taxon>Cryptophyceae</taxon>
        <taxon>Pyrenomonadales</taxon>
        <taxon>Geminigeraceae</taxon>
        <taxon>Guillardia</taxon>
    </lineage>
</organism>
<gene>
    <name evidence="1" type="primary">rbcS</name>
</gene>
<accession>P14960</accession>
<comment type="function">
    <text evidence="1">RuBisCO catalyzes two reactions: the carboxylation of D-ribulose 1,5-bisphosphate, the primary event in carbon dioxide fixation, as well as the oxidative fragmentation of the pentose substrate in the photorespiration process. Both reactions occur simultaneously and in competition at the same active site. Although the small subunit is not catalytic it is essential for maximal activity.</text>
</comment>
<comment type="subunit">
    <text evidence="1">Heterohexadecamer of 8 large and 8 small subunits.</text>
</comment>
<comment type="subcellular location">
    <subcellularLocation>
        <location evidence="1">Plastid</location>
        <location evidence="1">Chloroplast</location>
    </subcellularLocation>
</comment>
<comment type="miscellaneous">
    <text>In this alga, in contrast to plants, the small subunit is encoded in the chloroplast.</text>
</comment>
<comment type="miscellaneous">
    <text evidence="1">The basic functional RuBisCO is composed of a large chain homodimer in a 'head-to-tail' conformation. In form I RuBisCO this homodimer is arranged in a barrel-like tetramer with the small subunits forming a tetrameric 'cap' on each end of the 'barrel'.</text>
</comment>
<comment type="similarity">
    <text evidence="1">Belongs to the RuBisCO small chain family.</text>
</comment>
<keyword id="KW-0113">Calvin cycle</keyword>
<keyword id="KW-0120">Carbon dioxide fixation</keyword>
<keyword id="KW-0150">Chloroplast</keyword>
<keyword id="KW-0601">Photorespiration</keyword>
<keyword id="KW-0602">Photosynthesis</keyword>
<keyword id="KW-0934">Plastid</keyword>